<proteinExistence type="inferred from homology"/>
<keyword id="KW-0687">Ribonucleoprotein</keyword>
<keyword id="KW-0689">Ribosomal protein</keyword>
<keyword id="KW-0694">RNA-binding</keyword>
<keyword id="KW-0699">rRNA-binding</keyword>
<protein>
    <recommendedName>
        <fullName evidence="1">Small ribosomal subunit protein uS5</fullName>
    </recommendedName>
    <alternativeName>
        <fullName evidence="2">30S ribosomal protein S5</fullName>
    </alternativeName>
</protein>
<evidence type="ECO:0000255" key="1">
    <source>
        <dbReference type="HAMAP-Rule" id="MF_01307"/>
    </source>
</evidence>
<evidence type="ECO:0000305" key="2"/>
<dbReference type="EMBL" id="AE013218">
    <property type="protein sequence ID" value="AAM68031.1"/>
    <property type="molecule type" value="Genomic_DNA"/>
</dbReference>
<dbReference type="RefSeq" id="WP_011053997.1">
    <property type="nucleotide sequence ID" value="NC_004061.1"/>
</dbReference>
<dbReference type="SMR" id="Q8K966"/>
<dbReference type="STRING" id="198804.BUsg_488"/>
<dbReference type="GeneID" id="93003963"/>
<dbReference type="KEGG" id="bas:BUsg_488"/>
<dbReference type="eggNOG" id="COG0098">
    <property type="taxonomic scope" value="Bacteria"/>
</dbReference>
<dbReference type="HOGENOM" id="CLU_065898_2_2_6"/>
<dbReference type="Proteomes" id="UP000000416">
    <property type="component" value="Chromosome"/>
</dbReference>
<dbReference type="GO" id="GO:0015935">
    <property type="term" value="C:small ribosomal subunit"/>
    <property type="evidence" value="ECO:0007669"/>
    <property type="project" value="InterPro"/>
</dbReference>
<dbReference type="GO" id="GO:0019843">
    <property type="term" value="F:rRNA binding"/>
    <property type="evidence" value="ECO:0007669"/>
    <property type="project" value="UniProtKB-UniRule"/>
</dbReference>
<dbReference type="GO" id="GO:0003735">
    <property type="term" value="F:structural constituent of ribosome"/>
    <property type="evidence" value="ECO:0007669"/>
    <property type="project" value="InterPro"/>
</dbReference>
<dbReference type="GO" id="GO:0006412">
    <property type="term" value="P:translation"/>
    <property type="evidence" value="ECO:0007669"/>
    <property type="project" value="UniProtKB-UniRule"/>
</dbReference>
<dbReference type="FunFam" id="3.30.160.20:FF:000001">
    <property type="entry name" value="30S ribosomal protein S5"/>
    <property type="match status" value="1"/>
</dbReference>
<dbReference type="FunFam" id="3.30.230.10:FF:000002">
    <property type="entry name" value="30S ribosomal protein S5"/>
    <property type="match status" value="1"/>
</dbReference>
<dbReference type="Gene3D" id="3.30.160.20">
    <property type="match status" value="1"/>
</dbReference>
<dbReference type="Gene3D" id="3.30.230.10">
    <property type="match status" value="1"/>
</dbReference>
<dbReference type="HAMAP" id="MF_01307_B">
    <property type="entry name" value="Ribosomal_uS5_B"/>
    <property type="match status" value="1"/>
</dbReference>
<dbReference type="InterPro" id="IPR020568">
    <property type="entry name" value="Ribosomal_Su5_D2-typ_SF"/>
</dbReference>
<dbReference type="InterPro" id="IPR000851">
    <property type="entry name" value="Ribosomal_uS5"/>
</dbReference>
<dbReference type="InterPro" id="IPR005712">
    <property type="entry name" value="Ribosomal_uS5_bac-type"/>
</dbReference>
<dbReference type="InterPro" id="IPR005324">
    <property type="entry name" value="Ribosomal_uS5_C"/>
</dbReference>
<dbReference type="InterPro" id="IPR013810">
    <property type="entry name" value="Ribosomal_uS5_N"/>
</dbReference>
<dbReference type="InterPro" id="IPR018192">
    <property type="entry name" value="Ribosomal_uS5_N_CS"/>
</dbReference>
<dbReference type="InterPro" id="IPR014721">
    <property type="entry name" value="Ribsml_uS5_D2-typ_fold_subgr"/>
</dbReference>
<dbReference type="NCBIfam" id="TIGR01021">
    <property type="entry name" value="rpsE_bact"/>
    <property type="match status" value="1"/>
</dbReference>
<dbReference type="PANTHER" id="PTHR48277">
    <property type="entry name" value="MITOCHONDRIAL RIBOSOMAL PROTEIN S5"/>
    <property type="match status" value="1"/>
</dbReference>
<dbReference type="PANTHER" id="PTHR48277:SF1">
    <property type="entry name" value="MITOCHONDRIAL RIBOSOMAL PROTEIN S5"/>
    <property type="match status" value="1"/>
</dbReference>
<dbReference type="Pfam" id="PF00333">
    <property type="entry name" value="Ribosomal_S5"/>
    <property type="match status" value="1"/>
</dbReference>
<dbReference type="Pfam" id="PF03719">
    <property type="entry name" value="Ribosomal_S5_C"/>
    <property type="match status" value="1"/>
</dbReference>
<dbReference type="SUPFAM" id="SSF54768">
    <property type="entry name" value="dsRNA-binding domain-like"/>
    <property type="match status" value="1"/>
</dbReference>
<dbReference type="SUPFAM" id="SSF54211">
    <property type="entry name" value="Ribosomal protein S5 domain 2-like"/>
    <property type="match status" value="1"/>
</dbReference>
<dbReference type="PROSITE" id="PS00585">
    <property type="entry name" value="RIBOSOMAL_S5"/>
    <property type="match status" value="1"/>
</dbReference>
<dbReference type="PROSITE" id="PS50881">
    <property type="entry name" value="S5_DSRBD"/>
    <property type="match status" value="1"/>
</dbReference>
<organism>
    <name type="scientific">Buchnera aphidicola subsp. Schizaphis graminum (strain Sg)</name>
    <dbReference type="NCBI Taxonomy" id="198804"/>
    <lineage>
        <taxon>Bacteria</taxon>
        <taxon>Pseudomonadati</taxon>
        <taxon>Pseudomonadota</taxon>
        <taxon>Gammaproteobacteria</taxon>
        <taxon>Enterobacterales</taxon>
        <taxon>Erwiniaceae</taxon>
        <taxon>Buchnera</taxon>
    </lineage>
</organism>
<sequence>MANIEKKNNSELQEKLITVNRVSKTVKGGRIFSFTALTVVGNGEGRVGFGYGKAREVPAAIQKAMEKARRNMVTIPLVNKTLQHSLKGSHTGSNIFMKPASDGTGIIAGGAMRAVLEVAGIHNVLAKTYGSTNPINVVRATMNGLTNMKSPEMIAAKRNKLIEDILG</sequence>
<name>RS5_BUCAP</name>
<feature type="chain" id="PRO_0000131487" description="Small ribosomal subunit protein uS5">
    <location>
        <begin position="1"/>
        <end position="167"/>
    </location>
</feature>
<feature type="domain" description="S5 DRBM" evidence="1">
    <location>
        <begin position="12"/>
        <end position="75"/>
    </location>
</feature>
<accession>Q8K966</accession>
<reference key="1">
    <citation type="journal article" date="2002" name="Science">
        <title>50 million years of genomic stasis in endosymbiotic bacteria.</title>
        <authorList>
            <person name="Tamas I."/>
            <person name="Klasson L."/>
            <person name="Canbaeck B."/>
            <person name="Naeslund A.K."/>
            <person name="Eriksson A.-S."/>
            <person name="Wernegreen J.J."/>
            <person name="Sandstroem J.P."/>
            <person name="Moran N.A."/>
            <person name="Andersson S.G.E."/>
        </authorList>
    </citation>
    <scope>NUCLEOTIDE SEQUENCE [LARGE SCALE GENOMIC DNA]</scope>
    <source>
        <strain>Sg</strain>
    </source>
</reference>
<gene>
    <name evidence="1" type="primary">rpsE</name>
    <name type="ordered locus">BUsg_488</name>
</gene>
<comment type="function">
    <text evidence="1">With S4 and S12 plays an important role in translational accuracy.</text>
</comment>
<comment type="function">
    <text evidence="1">Located at the back of the 30S subunit body where it stabilizes the conformation of the head with respect to the body.</text>
</comment>
<comment type="subunit">
    <text evidence="1">Part of the 30S ribosomal subunit. Contacts proteins S4 and S8.</text>
</comment>
<comment type="domain">
    <text>The N-terminal domain interacts with the head of the 30S subunit; the C-terminal domain interacts with the body and contacts protein S4. The interaction surface between S4 and S5 is involved in control of translational fidelity.</text>
</comment>
<comment type="similarity">
    <text evidence="1">Belongs to the universal ribosomal protein uS5 family.</text>
</comment>